<protein>
    <recommendedName>
        <fullName evidence="1">Peptidyl-tRNA hydrolase</fullName>
        <shortName evidence="1">Pth</shortName>
        <ecNumber evidence="1">3.1.1.29</ecNumber>
    </recommendedName>
</protein>
<proteinExistence type="inferred from homology"/>
<sequence>MTLLVGLGNPTLRYAHTRHNAGFDILDSLISELDLSFTFSSKHNACLCVYKDFILLKPQTYMNLSGESVLSAKNFYKTEELLIVHDDLDLDLGVVRFKNGGGNGGHNGLKSIDLLCSNSYYRLRVGISKGMGVIEHVLSKFHKNEEPLKNAAFEHAKNALKFFIESHDFNAMQNRFTLKKPLKIES</sequence>
<dbReference type="EC" id="3.1.1.29" evidence="1"/>
<dbReference type="EMBL" id="CP001072">
    <property type="protein sequence ID" value="ACD48925.1"/>
    <property type="molecule type" value="Genomic_DNA"/>
</dbReference>
<dbReference type="RefSeq" id="WP_000173942.1">
    <property type="nucleotide sequence ID" value="NC_010698.2"/>
</dbReference>
<dbReference type="SMR" id="B2UVP3"/>
<dbReference type="KEGG" id="hps:HPSH_07670"/>
<dbReference type="HOGENOM" id="CLU_062456_4_1_7"/>
<dbReference type="GO" id="GO:0005737">
    <property type="term" value="C:cytoplasm"/>
    <property type="evidence" value="ECO:0007669"/>
    <property type="project" value="UniProtKB-SubCell"/>
</dbReference>
<dbReference type="GO" id="GO:0004045">
    <property type="term" value="F:peptidyl-tRNA hydrolase activity"/>
    <property type="evidence" value="ECO:0007669"/>
    <property type="project" value="UniProtKB-UniRule"/>
</dbReference>
<dbReference type="GO" id="GO:0000049">
    <property type="term" value="F:tRNA binding"/>
    <property type="evidence" value="ECO:0007669"/>
    <property type="project" value="UniProtKB-UniRule"/>
</dbReference>
<dbReference type="GO" id="GO:0006515">
    <property type="term" value="P:protein quality control for misfolded or incompletely synthesized proteins"/>
    <property type="evidence" value="ECO:0007669"/>
    <property type="project" value="UniProtKB-UniRule"/>
</dbReference>
<dbReference type="GO" id="GO:0072344">
    <property type="term" value="P:rescue of stalled ribosome"/>
    <property type="evidence" value="ECO:0007669"/>
    <property type="project" value="UniProtKB-UniRule"/>
</dbReference>
<dbReference type="CDD" id="cd00462">
    <property type="entry name" value="PTH"/>
    <property type="match status" value="1"/>
</dbReference>
<dbReference type="FunFam" id="3.40.50.1470:FF:000001">
    <property type="entry name" value="Peptidyl-tRNA hydrolase"/>
    <property type="match status" value="1"/>
</dbReference>
<dbReference type="Gene3D" id="3.40.50.1470">
    <property type="entry name" value="Peptidyl-tRNA hydrolase"/>
    <property type="match status" value="1"/>
</dbReference>
<dbReference type="HAMAP" id="MF_00083">
    <property type="entry name" value="Pept_tRNA_hydro_bact"/>
    <property type="match status" value="1"/>
</dbReference>
<dbReference type="InterPro" id="IPR001328">
    <property type="entry name" value="Pept_tRNA_hydro"/>
</dbReference>
<dbReference type="InterPro" id="IPR018171">
    <property type="entry name" value="Pept_tRNA_hydro_CS"/>
</dbReference>
<dbReference type="InterPro" id="IPR036416">
    <property type="entry name" value="Pept_tRNA_hydro_sf"/>
</dbReference>
<dbReference type="NCBIfam" id="TIGR00447">
    <property type="entry name" value="pth"/>
    <property type="match status" value="1"/>
</dbReference>
<dbReference type="PANTHER" id="PTHR17224">
    <property type="entry name" value="PEPTIDYL-TRNA HYDROLASE"/>
    <property type="match status" value="1"/>
</dbReference>
<dbReference type="PANTHER" id="PTHR17224:SF1">
    <property type="entry name" value="PEPTIDYL-TRNA HYDROLASE"/>
    <property type="match status" value="1"/>
</dbReference>
<dbReference type="Pfam" id="PF01195">
    <property type="entry name" value="Pept_tRNA_hydro"/>
    <property type="match status" value="1"/>
</dbReference>
<dbReference type="SUPFAM" id="SSF53178">
    <property type="entry name" value="Peptidyl-tRNA hydrolase-like"/>
    <property type="match status" value="1"/>
</dbReference>
<dbReference type="PROSITE" id="PS01195">
    <property type="entry name" value="PEPT_TRNA_HYDROL_1"/>
    <property type="match status" value="1"/>
</dbReference>
<dbReference type="PROSITE" id="PS01196">
    <property type="entry name" value="PEPT_TRNA_HYDROL_2"/>
    <property type="match status" value="1"/>
</dbReference>
<accession>B2UVP3</accession>
<evidence type="ECO:0000255" key="1">
    <source>
        <dbReference type="HAMAP-Rule" id="MF_00083"/>
    </source>
</evidence>
<feature type="chain" id="PRO_1000092948" description="Peptidyl-tRNA hydrolase">
    <location>
        <begin position="1"/>
        <end position="186"/>
    </location>
</feature>
<feature type="active site" description="Proton acceptor" evidence="1">
    <location>
        <position position="19"/>
    </location>
</feature>
<feature type="binding site" evidence="1">
    <location>
        <position position="14"/>
    </location>
    <ligand>
        <name>tRNA</name>
        <dbReference type="ChEBI" id="CHEBI:17843"/>
    </ligand>
</feature>
<feature type="binding site" evidence="1">
    <location>
        <position position="61"/>
    </location>
    <ligand>
        <name>tRNA</name>
        <dbReference type="ChEBI" id="CHEBI:17843"/>
    </ligand>
</feature>
<feature type="binding site" evidence="1">
    <location>
        <position position="63"/>
    </location>
    <ligand>
        <name>tRNA</name>
        <dbReference type="ChEBI" id="CHEBI:17843"/>
    </ligand>
</feature>
<feature type="binding site" evidence="1">
    <location>
        <position position="107"/>
    </location>
    <ligand>
        <name>tRNA</name>
        <dbReference type="ChEBI" id="CHEBI:17843"/>
    </ligand>
</feature>
<feature type="site" description="Discriminates between blocked and unblocked aminoacyl-tRNA" evidence="1">
    <location>
        <position position="9"/>
    </location>
</feature>
<feature type="site" description="Stabilizes the basic form of H active site to accept a proton" evidence="1">
    <location>
        <position position="86"/>
    </location>
</feature>
<organism>
    <name type="scientific">Helicobacter pylori (strain Shi470)</name>
    <dbReference type="NCBI Taxonomy" id="512562"/>
    <lineage>
        <taxon>Bacteria</taxon>
        <taxon>Pseudomonadati</taxon>
        <taxon>Campylobacterota</taxon>
        <taxon>Epsilonproteobacteria</taxon>
        <taxon>Campylobacterales</taxon>
        <taxon>Helicobacteraceae</taxon>
        <taxon>Helicobacter</taxon>
    </lineage>
</organism>
<gene>
    <name evidence="1" type="primary">pth</name>
    <name type="ordered locus">HPSH_07670</name>
</gene>
<name>PTH_HELPS</name>
<reference key="1">
    <citation type="submission" date="2008-05" db="EMBL/GenBank/DDBJ databases">
        <title>Genome sequence of Helicobacter pylori from the remote Amazon: traces of Asian ancestry of the first Americans.</title>
        <authorList>
            <person name="Kersulyte D."/>
            <person name="Kalia A."/>
            <person name="Gilman R.H."/>
            <person name="Berg D.E."/>
        </authorList>
    </citation>
    <scope>NUCLEOTIDE SEQUENCE [LARGE SCALE GENOMIC DNA]</scope>
    <source>
        <strain>Shi470</strain>
    </source>
</reference>
<comment type="function">
    <text evidence="1">Hydrolyzes ribosome-free peptidyl-tRNAs (with 1 or more amino acids incorporated), which drop off the ribosome during protein synthesis, or as a result of ribosome stalling.</text>
</comment>
<comment type="function">
    <text evidence="1">Catalyzes the release of premature peptidyl moieties from peptidyl-tRNA molecules trapped in stalled 50S ribosomal subunits, and thus maintains levels of free tRNAs and 50S ribosomes.</text>
</comment>
<comment type="catalytic activity">
    <reaction evidence="1">
        <text>an N-acyl-L-alpha-aminoacyl-tRNA + H2O = an N-acyl-L-amino acid + a tRNA + H(+)</text>
        <dbReference type="Rhea" id="RHEA:54448"/>
        <dbReference type="Rhea" id="RHEA-COMP:10123"/>
        <dbReference type="Rhea" id="RHEA-COMP:13883"/>
        <dbReference type="ChEBI" id="CHEBI:15377"/>
        <dbReference type="ChEBI" id="CHEBI:15378"/>
        <dbReference type="ChEBI" id="CHEBI:59874"/>
        <dbReference type="ChEBI" id="CHEBI:78442"/>
        <dbReference type="ChEBI" id="CHEBI:138191"/>
        <dbReference type="EC" id="3.1.1.29"/>
    </reaction>
</comment>
<comment type="subunit">
    <text evidence="1">Monomer.</text>
</comment>
<comment type="subcellular location">
    <subcellularLocation>
        <location evidence="1">Cytoplasm</location>
    </subcellularLocation>
</comment>
<comment type="similarity">
    <text evidence="1">Belongs to the PTH family.</text>
</comment>
<keyword id="KW-0963">Cytoplasm</keyword>
<keyword id="KW-0378">Hydrolase</keyword>
<keyword id="KW-0694">RNA-binding</keyword>
<keyword id="KW-0820">tRNA-binding</keyword>